<dbReference type="EC" id="7.1.2.2" evidence="1"/>
<dbReference type="EMBL" id="AL157959">
    <property type="protein sequence ID" value="CAM07796.1"/>
    <property type="molecule type" value="Genomic_DNA"/>
</dbReference>
<dbReference type="PIR" id="C81970">
    <property type="entry name" value="C81970"/>
</dbReference>
<dbReference type="RefSeq" id="WP_002247157.1">
    <property type="nucleotide sequence ID" value="NC_003116.1"/>
</dbReference>
<dbReference type="SMR" id="Q9JW70"/>
<dbReference type="EnsemblBacteria" id="CAM07796">
    <property type="protein sequence ID" value="CAM07796"/>
    <property type="gene ID" value="NMA0519"/>
</dbReference>
<dbReference type="GeneID" id="93386840"/>
<dbReference type="KEGG" id="nma:NMA0519"/>
<dbReference type="HOGENOM" id="CLU_022398_0_2_4"/>
<dbReference type="Proteomes" id="UP000000626">
    <property type="component" value="Chromosome"/>
</dbReference>
<dbReference type="GO" id="GO:0005886">
    <property type="term" value="C:plasma membrane"/>
    <property type="evidence" value="ECO:0007669"/>
    <property type="project" value="UniProtKB-SubCell"/>
</dbReference>
<dbReference type="GO" id="GO:0045259">
    <property type="term" value="C:proton-transporting ATP synthase complex"/>
    <property type="evidence" value="ECO:0007669"/>
    <property type="project" value="UniProtKB-KW"/>
</dbReference>
<dbReference type="GO" id="GO:0005524">
    <property type="term" value="F:ATP binding"/>
    <property type="evidence" value="ECO:0007669"/>
    <property type="project" value="UniProtKB-UniRule"/>
</dbReference>
<dbReference type="GO" id="GO:0016887">
    <property type="term" value="F:ATP hydrolysis activity"/>
    <property type="evidence" value="ECO:0007669"/>
    <property type="project" value="InterPro"/>
</dbReference>
<dbReference type="GO" id="GO:0046933">
    <property type="term" value="F:proton-transporting ATP synthase activity, rotational mechanism"/>
    <property type="evidence" value="ECO:0007669"/>
    <property type="project" value="UniProtKB-UniRule"/>
</dbReference>
<dbReference type="CDD" id="cd18110">
    <property type="entry name" value="ATP-synt_F1_beta_C"/>
    <property type="match status" value="1"/>
</dbReference>
<dbReference type="CDD" id="cd18115">
    <property type="entry name" value="ATP-synt_F1_beta_N"/>
    <property type="match status" value="1"/>
</dbReference>
<dbReference type="CDD" id="cd01133">
    <property type="entry name" value="F1-ATPase_beta_CD"/>
    <property type="match status" value="1"/>
</dbReference>
<dbReference type="FunFam" id="1.10.1140.10:FF:000001">
    <property type="entry name" value="ATP synthase subunit beta"/>
    <property type="match status" value="1"/>
</dbReference>
<dbReference type="FunFam" id="2.40.10.170:FF:000003">
    <property type="entry name" value="ATP synthase subunit beta"/>
    <property type="match status" value="1"/>
</dbReference>
<dbReference type="FunFam" id="3.40.50.300:FF:000004">
    <property type="entry name" value="ATP synthase subunit beta"/>
    <property type="match status" value="1"/>
</dbReference>
<dbReference type="Gene3D" id="2.40.10.170">
    <property type="match status" value="1"/>
</dbReference>
<dbReference type="Gene3D" id="1.10.1140.10">
    <property type="entry name" value="Bovine Mitochondrial F1-atpase, Atp Synthase Beta Chain, Chain D, domain 3"/>
    <property type="match status" value="1"/>
</dbReference>
<dbReference type="Gene3D" id="3.40.50.300">
    <property type="entry name" value="P-loop containing nucleotide triphosphate hydrolases"/>
    <property type="match status" value="1"/>
</dbReference>
<dbReference type="HAMAP" id="MF_01347">
    <property type="entry name" value="ATP_synth_beta_bact"/>
    <property type="match status" value="1"/>
</dbReference>
<dbReference type="InterPro" id="IPR003593">
    <property type="entry name" value="AAA+_ATPase"/>
</dbReference>
<dbReference type="InterPro" id="IPR055190">
    <property type="entry name" value="ATP-synt_VA_C"/>
</dbReference>
<dbReference type="InterPro" id="IPR005722">
    <property type="entry name" value="ATP_synth_F1_bsu"/>
</dbReference>
<dbReference type="InterPro" id="IPR020003">
    <property type="entry name" value="ATPase_a/bsu_AS"/>
</dbReference>
<dbReference type="InterPro" id="IPR050053">
    <property type="entry name" value="ATPase_alpha/beta_chains"/>
</dbReference>
<dbReference type="InterPro" id="IPR004100">
    <property type="entry name" value="ATPase_F1/V1/A1_a/bsu_N"/>
</dbReference>
<dbReference type="InterPro" id="IPR036121">
    <property type="entry name" value="ATPase_F1/V1/A1_a/bsu_N_sf"/>
</dbReference>
<dbReference type="InterPro" id="IPR000194">
    <property type="entry name" value="ATPase_F1/V1/A1_a/bsu_nucl-bd"/>
</dbReference>
<dbReference type="InterPro" id="IPR024034">
    <property type="entry name" value="ATPase_F1/V1_b/a_C"/>
</dbReference>
<dbReference type="InterPro" id="IPR027417">
    <property type="entry name" value="P-loop_NTPase"/>
</dbReference>
<dbReference type="NCBIfam" id="TIGR01039">
    <property type="entry name" value="atpD"/>
    <property type="match status" value="1"/>
</dbReference>
<dbReference type="PANTHER" id="PTHR15184">
    <property type="entry name" value="ATP SYNTHASE"/>
    <property type="match status" value="1"/>
</dbReference>
<dbReference type="PANTHER" id="PTHR15184:SF71">
    <property type="entry name" value="ATP SYNTHASE SUBUNIT BETA, MITOCHONDRIAL"/>
    <property type="match status" value="1"/>
</dbReference>
<dbReference type="Pfam" id="PF00006">
    <property type="entry name" value="ATP-synt_ab"/>
    <property type="match status" value="1"/>
</dbReference>
<dbReference type="Pfam" id="PF02874">
    <property type="entry name" value="ATP-synt_ab_N"/>
    <property type="match status" value="1"/>
</dbReference>
<dbReference type="Pfam" id="PF22919">
    <property type="entry name" value="ATP-synt_VA_C"/>
    <property type="match status" value="1"/>
</dbReference>
<dbReference type="SMART" id="SM00382">
    <property type="entry name" value="AAA"/>
    <property type="match status" value="1"/>
</dbReference>
<dbReference type="SUPFAM" id="SSF47917">
    <property type="entry name" value="C-terminal domain of alpha and beta subunits of F1 ATP synthase"/>
    <property type="match status" value="1"/>
</dbReference>
<dbReference type="SUPFAM" id="SSF50615">
    <property type="entry name" value="N-terminal domain of alpha and beta subunits of F1 ATP synthase"/>
    <property type="match status" value="1"/>
</dbReference>
<dbReference type="SUPFAM" id="SSF52540">
    <property type="entry name" value="P-loop containing nucleoside triphosphate hydrolases"/>
    <property type="match status" value="1"/>
</dbReference>
<dbReference type="PROSITE" id="PS00152">
    <property type="entry name" value="ATPASE_ALPHA_BETA"/>
    <property type="match status" value="1"/>
</dbReference>
<gene>
    <name evidence="1" type="primary">atpD</name>
    <name type="ordered locus">NMA0519</name>
</gene>
<feature type="chain" id="PRO_0000254312" description="ATP synthase subunit beta">
    <location>
        <begin position="1"/>
        <end position="465"/>
    </location>
</feature>
<feature type="binding site" evidence="1">
    <location>
        <begin position="148"/>
        <end position="155"/>
    </location>
    <ligand>
        <name>ATP</name>
        <dbReference type="ChEBI" id="CHEBI:30616"/>
    </ligand>
</feature>
<accession>Q9JW70</accession>
<accession>A1IPX5</accession>
<organism>
    <name type="scientific">Neisseria meningitidis serogroup A / serotype 4A (strain DSM 15465 / Z2491)</name>
    <dbReference type="NCBI Taxonomy" id="122587"/>
    <lineage>
        <taxon>Bacteria</taxon>
        <taxon>Pseudomonadati</taxon>
        <taxon>Pseudomonadota</taxon>
        <taxon>Betaproteobacteria</taxon>
        <taxon>Neisseriales</taxon>
        <taxon>Neisseriaceae</taxon>
        <taxon>Neisseria</taxon>
    </lineage>
</organism>
<comment type="function">
    <text evidence="1">Produces ATP from ADP in the presence of a proton gradient across the membrane. The catalytic sites are hosted primarily by the beta subunits.</text>
</comment>
<comment type="catalytic activity">
    <reaction evidence="1">
        <text>ATP + H2O + 4 H(+)(in) = ADP + phosphate + 5 H(+)(out)</text>
        <dbReference type="Rhea" id="RHEA:57720"/>
        <dbReference type="ChEBI" id="CHEBI:15377"/>
        <dbReference type="ChEBI" id="CHEBI:15378"/>
        <dbReference type="ChEBI" id="CHEBI:30616"/>
        <dbReference type="ChEBI" id="CHEBI:43474"/>
        <dbReference type="ChEBI" id="CHEBI:456216"/>
        <dbReference type="EC" id="7.1.2.2"/>
    </reaction>
</comment>
<comment type="subunit">
    <text evidence="1">F-type ATPases have 2 components, CF(1) - the catalytic core - and CF(0) - the membrane proton channel. CF(1) has five subunits: alpha(3), beta(3), gamma(1), delta(1), epsilon(1). CF(0) has three main subunits: a(1), b(2) and c(9-12). The alpha and beta chains form an alternating ring which encloses part of the gamma chain. CF(1) is attached to CF(0) by a central stalk formed by the gamma and epsilon chains, while a peripheral stalk is formed by the delta and b chains.</text>
</comment>
<comment type="subcellular location">
    <subcellularLocation>
        <location evidence="1">Cell inner membrane</location>
        <topology evidence="1">Peripheral membrane protein</topology>
    </subcellularLocation>
</comment>
<comment type="similarity">
    <text evidence="1">Belongs to the ATPase alpha/beta chains family.</text>
</comment>
<keyword id="KW-0066">ATP synthesis</keyword>
<keyword id="KW-0067">ATP-binding</keyword>
<keyword id="KW-0997">Cell inner membrane</keyword>
<keyword id="KW-1003">Cell membrane</keyword>
<keyword id="KW-0139">CF(1)</keyword>
<keyword id="KW-0375">Hydrogen ion transport</keyword>
<keyword id="KW-0406">Ion transport</keyword>
<keyword id="KW-0472">Membrane</keyword>
<keyword id="KW-0547">Nucleotide-binding</keyword>
<keyword id="KW-1278">Translocase</keyword>
<keyword id="KW-0813">Transport</keyword>
<reference key="1">
    <citation type="journal article" date="2000" name="Nature">
        <title>Complete DNA sequence of a serogroup A strain of Neisseria meningitidis Z2491.</title>
        <authorList>
            <person name="Parkhill J."/>
            <person name="Achtman M."/>
            <person name="James K.D."/>
            <person name="Bentley S.D."/>
            <person name="Churcher C.M."/>
            <person name="Klee S.R."/>
            <person name="Morelli G."/>
            <person name="Basham D."/>
            <person name="Brown D."/>
            <person name="Chillingworth T."/>
            <person name="Davies R.M."/>
            <person name="Davis P."/>
            <person name="Devlin K."/>
            <person name="Feltwell T."/>
            <person name="Hamlin N."/>
            <person name="Holroyd S."/>
            <person name="Jagels K."/>
            <person name="Leather S."/>
            <person name="Moule S."/>
            <person name="Mungall K.L."/>
            <person name="Quail M.A."/>
            <person name="Rajandream M.A."/>
            <person name="Rutherford K.M."/>
            <person name="Simmonds M."/>
            <person name="Skelton J."/>
            <person name="Whitehead S."/>
            <person name="Spratt B.G."/>
            <person name="Barrell B.G."/>
        </authorList>
    </citation>
    <scope>NUCLEOTIDE SEQUENCE [LARGE SCALE GENOMIC DNA]</scope>
    <source>
        <strain>DSM 15465 / Z2491</strain>
    </source>
</reference>
<proteinExistence type="inferred from homology"/>
<name>ATPB_NEIMA</name>
<protein>
    <recommendedName>
        <fullName evidence="1">ATP synthase subunit beta</fullName>
        <ecNumber evidence="1">7.1.2.2</ecNumber>
    </recommendedName>
    <alternativeName>
        <fullName evidence="1">ATP synthase F1 sector subunit beta</fullName>
    </alternativeName>
    <alternativeName>
        <fullName evidence="1">F-ATPase subunit beta</fullName>
    </alternativeName>
</protein>
<sequence>MSQGKIVQIIGAVVDVEFPRDMIPRVYDALKLDENGLTLEVQQLLGDGVVRTIAMGSSDGLKRGMTVSNTGAPITVPVGKGTLGRIVDVLGTPVDEAGPIDTDKSRAIHQAAPKFDELSSTTELLETGIKVIDLLCPFAKGGKVGLFGGAGVGKTVNMMELINNIAKAHSGLSVFAGVGERTREGNDFYHEMKDSNVLDKVAMVYGQMNEPPGNRLRVALTGLTMAEYFRDEKDENGKGRDVLFFVDNIYRYTLAGTEVSALLGRMPSAVGYQPTLAEEMGCLQERITSTQTGSITSIQAVYVPADDLTDPSPATTFAHLDATVVLSRDIASLGIYPAVDPLDSTSRQLDPMVLGQEHYDVARGVQSTLQKYKELRDIIAILGMDELSDEDKLTVMRARKIQRFLSQPFHVAEVFTGSPGKYVALRDTIAGFKAILNGEYDYLPEQAFYMVGSIEEAVEKAKTLN</sequence>
<evidence type="ECO:0000255" key="1">
    <source>
        <dbReference type="HAMAP-Rule" id="MF_01347"/>
    </source>
</evidence>